<gene>
    <name type="primary">FTSH</name>
</gene>
<comment type="function">
    <text evidence="1">Seems to act as an ATP-dependent zinc metallopeptidase.</text>
</comment>
<comment type="cofactor">
    <cofactor evidence="3">
        <name>Zn(2+)</name>
        <dbReference type="ChEBI" id="CHEBI:29105"/>
    </cofactor>
    <text evidence="3">Binds 1 zinc ion per subunit.</text>
</comment>
<comment type="subcellular location">
    <subcellularLocation>
        <location evidence="3">Plastid</location>
        <location evidence="3">Chloroplast membrane</location>
        <topology evidence="3">Multi-pass membrane protein</topology>
    </subcellularLocation>
</comment>
<comment type="similarity">
    <text evidence="3">In the N-terminal section; belongs to the AAA ATPase family.</text>
</comment>
<comment type="similarity">
    <text evidence="3">In the C-terminal section; belongs to the peptidase M41 family.</text>
</comment>
<feature type="transit peptide" description="Chloroplast" evidence="2">
    <location>
        <begin position="1" status="less than"/>
        <end status="unknown"/>
    </location>
</feature>
<feature type="chain" id="PRO_0000000245" description="ATP-dependent zinc metalloprotease FTSH, chloroplastic">
    <location>
        <begin status="unknown"/>
        <end position="662"/>
    </location>
</feature>
<feature type="transmembrane region" description="Helical" evidence="2">
    <location>
        <begin position="35"/>
        <end position="55"/>
    </location>
</feature>
<feature type="transmembrane region" description="Helical" evidence="2">
    <location>
        <begin position="173"/>
        <end position="193"/>
    </location>
</feature>
<feature type="active site" evidence="1">
    <location>
        <position position="493"/>
    </location>
</feature>
<feature type="binding site" evidence="2">
    <location>
        <begin position="270"/>
        <end position="277"/>
    </location>
    <ligand>
        <name>ATP</name>
        <dbReference type="ChEBI" id="CHEBI:30616"/>
    </ligand>
</feature>
<feature type="binding site" evidence="1">
    <location>
        <position position="492"/>
    </location>
    <ligand>
        <name>Zn(2+)</name>
        <dbReference type="ChEBI" id="CHEBI:29105"/>
        <note>catalytic</note>
    </ligand>
</feature>
<feature type="binding site" evidence="1">
    <location>
        <position position="496"/>
    </location>
    <ligand>
        <name>Zn(2+)</name>
        <dbReference type="ChEBI" id="CHEBI:29105"/>
        <note>catalytic</note>
    </ligand>
</feature>
<feature type="binding site" evidence="1">
    <location>
        <position position="573"/>
    </location>
    <ligand>
        <name>Zn(2+)</name>
        <dbReference type="ChEBI" id="CHEBI:29105"/>
        <note>catalytic</note>
    </ligand>
</feature>
<feature type="non-terminal residue">
    <location>
        <position position="1"/>
    </location>
</feature>
<feature type="non-terminal residue">
    <location>
        <position position="662"/>
    </location>
</feature>
<evidence type="ECO:0000250" key="1"/>
<evidence type="ECO:0000255" key="2"/>
<evidence type="ECO:0000305" key="3"/>
<dbReference type="EC" id="3.4.24.-"/>
<dbReference type="EMBL" id="X90472">
    <property type="protein sequence ID" value="CAA62084.1"/>
    <property type="molecule type" value="mRNA"/>
</dbReference>
<dbReference type="PIR" id="S58298">
    <property type="entry name" value="S58298"/>
</dbReference>
<dbReference type="SMR" id="Q39444"/>
<dbReference type="MEROPS" id="M41.020"/>
<dbReference type="GO" id="GO:0031969">
    <property type="term" value="C:chloroplast membrane"/>
    <property type="evidence" value="ECO:0007669"/>
    <property type="project" value="UniProtKB-SubCell"/>
</dbReference>
<dbReference type="GO" id="GO:0005524">
    <property type="term" value="F:ATP binding"/>
    <property type="evidence" value="ECO:0007669"/>
    <property type="project" value="UniProtKB-KW"/>
</dbReference>
<dbReference type="GO" id="GO:0016887">
    <property type="term" value="F:ATP hydrolysis activity"/>
    <property type="evidence" value="ECO:0007669"/>
    <property type="project" value="InterPro"/>
</dbReference>
<dbReference type="GO" id="GO:0004176">
    <property type="term" value="F:ATP-dependent peptidase activity"/>
    <property type="evidence" value="ECO:0007669"/>
    <property type="project" value="InterPro"/>
</dbReference>
<dbReference type="GO" id="GO:0046872">
    <property type="term" value="F:metal ion binding"/>
    <property type="evidence" value="ECO:0007669"/>
    <property type="project" value="UniProtKB-KW"/>
</dbReference>
<dbReference type="GO" id="GO:0004222">
    <property type="term" value="F:metalloendopeptidase activity"/>
    <property type="evidence" value="ECO:0007669"/>
    <property type="project" value="InterPro"/>
</dbReference>
<dbReference type="GO" id="GO:0051301">
    <property type="term" value="P:cell division"/>
    <property type="evidence" value="ECO:0007669"/>
    <property type="project" value="UniProtKB-KW"/>
</dbReference>
<dbReference type="GO" id="GO:0006508">
    <property type="term" value="P:proteolysis"/>
    <property type="evidence" value="ECO:0007669"/>
    <property type="project" value="UniProtKB-KW"/>
</dbReference>
<dbReference type="CDD" id="cd19501">
    <property type="entry name" value="RecA-like_FtsH"/>
    <property type="match status" value="1"/>
</dbReference>
<dbReference type="FunFam" id="1.10.8.60:FF:000001">
    <property type="entry name" value="ATP-dependent zinc metalloprotease FtsH"/>
    <property type="match status" value="1"/>
</dbReference>
<dbReference type="FunFam" id="1.20.58.760:FF:000001">
    <property type="entry name" value="ATP-dependent zinc metalloprotease FtsH"/>
    <property type="match status" value="1"/>
</dbReference>
<dbReference type="FunFam" id="3.40.50.300:FF:000001">
    <property type="entry name" value="ATP-dependent zinc metalloprotease FtsH"/>
    <property type="match status" value="1"/>
</dbReference>
<dbReference type="FunFam" id="3.30.720.210:FF:000003">
    <property type="entry name" value="ATP-dependent zinc metalloprotease FTSH, chloroplastic"/>
    <property type="match status" value="1"/>
</dbReference>
<dbReference type="Gene3D" id="1.10.8.60">
    <property type="match status" value="1"/>
</dbReference>
<dbReference type="Gene3D" id="3.30.720.210">
    <property type="match status" value="1"/>
</dbReference>
<dbReference type="Gene3D" id="3.40.50.300">
    <property type="entry name" value="P-loop containing nucleotide triphosphate hydrolases"/>
    <property type="match status" value="1"/>
</dbReference>
<dbReference type="Gene3D" id="1.20.58.760">
    <property type="entry name" value="Peptidase M41"/>
    <property type="match status" value="1"/>
</dbReference>
<dbReference type="HAMAP" id="MF_01458">
    <property type="entry name" value="FtsH"/>
    <property type="match status" value="1"/>
</dbReference>
<dbReference type="InterPro" id="IPR003593">
    <property type="entry name" value="AAA+_ATPase"/>
</dbReference>
<dbReference type="InterPro" id="IPR041569">
    <property type="entry name" value="AAA_lid_3"/>
</dbReference>
<dbReference type="InterPro" id="IPR003959">
    <property type="entry name" value="ATPase_AAA_core"/>
</dbReference>
<dbReference type="InterPro" id="IPR003960">
    <property type="entry name" value="ATPase_AAA_CS"/>
</dbReference>
<dbReference type="InterPro" id="IPR005936">
    <property type="entry name" value="FtsH"/>
</dbReference>
<dbReference type="InterPro" id="IPR027417">
    <property type="entry name" value="P-loop_NTPase"/>
</dbReference>
<dbReference type="InterPro" id="IPR000642">
    <property type="entry name" value="Peptidase_M41"/>
</dbReference>
<dbReference type="InterPro" id="IPR037219">
    <property type="entry name" value="Peptidase_M41-like"/>
</dbReference>
<dbReference type="NCBIfam" id="TIGR01241">
    <property type="entry name" value="FtsH_fam"/>
    <property type="match status" value="1"/>
</dbReference>
<dbReference type="PANTHER" id="PTHR23076:SF132">
    <property type="entry name" value="ATP-DEPENDENT ZINC METALLOPROTEASE FTSH, CHLOROPLASTIC"/>
    <property type="match status" value="1"/>
</dbReference>
<dbReference type="PANTHER" id="PTHR23076">
    <property type="entry name" value="METALLOPROTEASE M41 FTSH"/>
    <property type="match status" value="1"/>
</dbReference>
<dbReference type="Pfam" id="PF00004">
    <property type="entry name" value="AAA"/>
    <property type="match status" value="1"/>
</dbReference>
<dbReference type="Pfam" id="PF17862">
    <property type="entry name" value="AAA_lid_3"/>
    <property type="match status" value="1"/>
</dbReference>
<dbReference type="Pfam" id="PF01434">
    <property type="entry name" value="Peptidase_M41"/>
    <property type="match status" value="1"/>
</dbReference>
<dbReference type="SMART" id="SM00382">
    <property type="entry name" value="AAA"/>
    <property type="match status" value="1"/>
</dbReference>
<dbReference type="SUPFAM" id="SSF140990">
    <property type="entry name" value="FtsH protease domain-like"/>
    <property type="match status" value="1"/>
</dbReference>
<dbReference type="SUPFAM" id="SSF52540">
    <property type="entry name" value="P-loop containing nucleoside triphosphate hydrolases"/>
    <property type="match status" value="1"/>
</dbReference>
<dbReference type="PROSITE" id="PS00674">
    <property type="entry name" value="AAA"/>
    <property type="match status" value="1"/>
</dbReference>
<reference key="1">
    <citation type="submission" date="1995-08" db="EMBL/GenBank/DDBJ databases">
        <authorList>
            <person name="Houlne G."/>
            <person name="Schantz M.L."/>
            <person name="Schantz R."/>
        </authorList>
    </citation>
    <scope>NUCLEOTIDE SEQUENCE [MRNA]</scope>
</reference>
<keyword id="KW-0067">ATP-binding</keyword>
<keyword id="KW-0131">Cell cycle</keyword>
<keyword id="KW-0132">Cell division</keyword>
<keyword id="KW-0150">Chloroplast</keyword>
<keyword id="KW-0378">Hydrolase</keyword>
<keyword id="KW-0472">Membrane</keyword>
<keyword id="KW-0479">Metal-binding</keyword>
<keyword id="KW-0482">Metalloprotease</keyword>
<keyword id="KW-0547">Nucleotide-binding</keyword>
<keyword id="KW-0934">Plastid</keyword>
<keyword id="KW-0645">Protease</keyword>
<keyword id="KW-0809">Transit peptide</keyword>
<keyword id="KW-0812">Transmembrane</keyword>
<keyword id="KW-1133">Transmembrane helix</keyword>
<keyword id="KW-0862">Zinc</keyword>
<name>FTSH_CAPAN</name>
<protein>
    <recommendedName>
        <fullName>ATP-dependent zinc metalloprotease FTSH, chloroplastic</fullName>
        <ecNumber>3.4.24.-</ecNumber>
    </recommendedName>
</protein>
<accession>Q39444</accession>
<organism>
    <name type="scientific">Capsicum annuum</name>
    <name type="common">Capsicum pepper</name>
    <dbReference type="NCBI Taxonomy" id="4072"/>
    <lineage>
        <taxon>Eukaryota</taxon>
        <taxon>Viridiplantae</taxon>
        <taxon>Streptophyta</taxon>
        <taxon>Embryophyta</taxon>
        <taxon>Tracheophyta</taxon>
        <taxon>Spermatophyta</taxon>
        <taxon>Magnoliopsida</taxon>
        <taxon>eudicotyledons</taxon>
        <taxon>Gunneridae</taxon>
        <taxon>Pentapetalae</taxon>
        <taxon>asterids</taxon>
        <taxon>lamiids</taxon>
        <taxon>Solanales</taxon>
        <taxon>Solanaceae</taxon>
        <taxon>Solanoideae</taxon>
        <taxon>Capsiceae</taxon>
        <taxon>Capsicum</taxon>
    </lineage>
</organism>
<sequence>KYFNFHSKRKCIITQSTLNKKPNSDNFKNAQSKAALAALLFSSITPHAIALDDAAPIASPPQVMEVEAPNPNTSNPLPFSQNLVLNAPKTQASPVSDLPESTQWRYSEFLNAVKKGKVERVRFSKDGSALQLTAVDGRRANVIVPNDPDLIDILAMNGVDISVSEGEGGNGLFSVIGNLLFPFIAFAGLFFLFRRSQGGPGGPGGLGGPMDFGRSKSKFQEVPETGVTFADVAGADQAKLELQEVVDFLKNPDKYTALGAKIPKGCLLVGPPGTGKTLLARAVAGEAGVPFFSCAASEFVELFVGVGASRVRHLFENAKSKAPCIVFIDEIDAVGRQRGAGLGGGNDEREQTINQLLTEMDGFSGNSGVIVLAATNRPDVLDSALLRPGKFDRQVTVDRPDVAGRVRILQVHSRGKALAKDVDFDKIARRTPGFTGADLQNLMNEAAILAARRDLKEISKDEISDALERIIAGPEKKNAVVSDEKKKLVAYHEAGHALVGALMPEYDPVAKISIIPRGQAGGLTFFAPSEERLESGLYSRSYLENQMAVALGGRVAEEVIFGEDNVTTGASNDFMQVSRVARQMVERLGFSKKIGQVAIGGGGGNPFLGQQMSTQKDYSMATADVVDSEVRELVEKAYERAKQIITTHIDILHKLAQLLIEK</sequence>
<proteinExistence type="evidence at transcript level"/>